<organism>
    <name type="scientific">Scolopendra dehaani</name>
    <name type="common">Thai centipede</name>
    <name type="synonym">Scolopendra subspinipes dehaani</name>
    <dbReference type="NCBI Taxonomy" id="2609776"/>
    <lineage>
        <taxon>Eukaryota</taxon>
        <taxon>Metazoa</taxon>
        <taxon>Ecdysozoa</taxon>
        <taxon>Arthropoda</taxon>
        <taxon>Myriapoda</taxon>
        <taxon>Chilopoda</taxon>
        <taxon>Pleurostigmophora</taxon>
        <taxon>Scolopendromorpha</taxon>
        <taxon>Scolopendridae</taxon>
        <taxon>Scolopendra</taxon>
    </lineage>
</organism>
<dbReference type="EMBL" id="KC145039">
    <property type="status" value="NOT_ANNOTATED_CDS"/>
    <property type="molecule type" value="mRNA"/>
</dbReference>
<dbReference type="SMR" id="P0DPT6"/>
<dbReference type="GO" id="GO:0005576">
    <property type="term" value="C:extracellular region"/>
    <property type="evidence" value="ECO:0007669"/>
    <property type="project" value="UniProtKB-SubCell"/>
</dbReference>
<dbReference type="GO" id="GO:0005246">
    <property type="term" value="F:calcium channel regulator activity"/>
    <property type="evidence" value="ECO:0007669"/>
    <property type="project" value="UniProtKB-KW"/>
</dbReference>
<dbReference type="GO" id="GO:0090729">
    <property type="term" value="F:toxin activity"/>
    <property type="evidence" value="ECO:0007669"/>
    <property type="project" value="UniProtKB-KW"/>
</dbReference>
<feature type="signal peptide" evidence="1">
    <location>
        <begin position="1"/>
        <end position="23"/>
    </location>
</feature>
<feature type="chain" id="PRO_0000446800" description="Omega-scoloptoxin(15)-Ssd3c" evidence="3">
    <location>
        <begin position="24"/>
        <end position="76"/>
    </location>
</feature>
<accession>P0DPT6</accession>
<proteinExistence type="evidence at protein level"/>
<reference key="1">
    <citation type="journal article" date="2012" name="J. Proteome Res.">
        <title>Venomic and transcriptomic analysis of centipede Scolopendra subspinipes dehaani.</title>
        <authorList>
            <person name="Liu Z.C."/>
            <person name="Zhang R."/>
            <person name="Zhao F."/>
            <person name="Chen Z.M."/>
            <person name="Liu H.W."/>
            <person name="Wang Y.J."/>
            <person name="Jiang P."/>
            <person name="Zhang Y."/>
            <person name="Wu Y."/>
            <person name="Ding J.P."/>
            <person name="Lee W.H."/>
            <person name="Zhang Y."/>
        </authorList>
    </citation>
    <scope>NUCLEOTIDE SEQUENCE [MRNA]</scope>
    <scope>PROTEIN SEQUENCE OF 24-45</scope>
    <scope>SUBCELLULAR LOCATION</scope>
    <scope>FUNCTION</scope>
    <source>
        <tissue>Venom</tissue>
        <tissue>Venom gland</tissue>
    </source>
</reference>
<protein>
    <recommendedName>
        <fullName evidence="3">Omega-scoloptoxin(15)-Ssd3c</fullName>
        <shortName evidence="3">Omega-SLPTX(15)-Ssd3c</shortName>
    </recommendedName>
    <alternativeName>
        <fullName evidence="2">Toxin SSD1052</fullName>
    </alternativeName>
</protein>
<sequence>MEKKIIFLVVLVALLALPEFISSEVIKRDIPYKKRKFPYKSECLKACAAAFTGGDESRIQEGKPGFFKCTCYYTTG</sequence>
<evidence type="ECO:0000269" key="1">
    <source>
    </source>
</evidence>
<evidence type="ECO:0000303" key="2">
    <source>
    </source>
</evidence>
<evidence type="ECO:0000305" key="3"/>
<evidence type="ECO:0000305" key="4">
    <source>
    </source>
</evidence>
<name>TXF3C_SCODE</name>
<comment type="function">
    <text evidence="1">Voltage-gated calcium channel inhibitor (Cav) (8.6% block at 10 nM), when tested on DRG neurons.</text>
</comment>
<comment type="subcellular location">
    <subcellularLocation>
        <location evidence="1">Secreted</location>
    </subcellularLocation>
</comment>
<comment type="tissue specificity">
    <text evidence="4">Expressed by the venom gland.</text>
</comment>
<comment type="domain">
    <text evidence="3">Has the structural arrangement of an alpha-helix connected to a beta-sheet by disulfide bonds (CSalpha/beta). Since the toxin contains only 2 disulfide bonds, it is called 2ds-CSalpha/beta.</text>
</comment>
<comment type="PTM">
    <text evidence="3">Contains 2 disulfide bonds.</text>
</comment>
<comment type="similarity">
    <text evidence="3">Belongs to the scoloptoxin-15 family.</text>
</comment>
<keyword id="KW-0108">Calcium channel impairing toxin</keyword>
<keyword id="KW-0903">Direct protein sequencing</keyword>
<keyword id="KW-1015">Disulfide bond</keyword>
<keyword id="KW-0872">Ion channel impairing toxin</keyword>
<keyword id="KW-0964">Secreted</keyword>
<keyword id="KW-0732">Signal</keyword>
<keyword id="KW-0800">Toxin</keyword>
<keyword id="KW-1218">Voltage-gated calcium channel impairing toxin</keyword>